<proteinExistence type="inferred from homology"/>
<keyword id="KW-0007">Acetylation</keyword>
<keyword id="KW-1185">Reference proteome</keyword>
<keyword id="KW-0687">Ribonucleoprotein</keyword>
<keyword id="KW-0689">Ribosomal protein</keyword>
<keyword id="KW-0694">RNA-binding</keyword>
<keyword id="KW-0699">rRNA-binding</keyword>
<feature type="chain" id="PRO_1000166810" description="Large ribosomal subunit protein uL6">
    <location>
        <begin position="1"/>
        <end position="177"/>
    </location>
</feature>
<feature type="modified residue" description="N6-acetyllysine" evidence="1">
    <location>
        <position position="44"/>
    </location>
</feature>
<accession>B7LI04</accession>
<evidence type="ECO:0000255" key="1">
    <source>
        <dbReference type="HAMAP-Rule" id="MF_01365"/>
    </source>
</evidence>
<evidence type="ECO:0000305" key="2"/>
<protein>
    <recommendedName>
        <fullName evidence="1">Large ribosomal subunit protein uL6</fullName>
    </recommendedName>
    <alternativeName>
        <fullName evidence="2">50S ribosomal protein L6</fullName>
    </alternativeName>
</protein>
<organism>
    <name type="scientific">Escherichia coli (strain 55989 / EAEC)</name>
    <dbReference type="NCBI Taxonomy" id="585055"/>
    <lineage>
        <taxon>Bacteria</taxon>
        <taxon>Pseudomonadati</taxon>
        <taxon>Pseudomonadota</taxon>
        <taxon>Gammaproteobacteria</taxon>
        <taxon>Enterobacterales</taxon>
        <taxon>Enterobacteriaceae</taxon>
        <taxon>Escherichia</taxon>
    </lineage>
</organism>
<dbReference type="EMBL" id="CU928145">
    <property type="protein sequence ID" value="CAV00012.1"/>
    <property type="molecule type" value="Genomic_DNA"/>
</dbReference>
<dbReference type="RefSeq" id="WP_000091945.1">
    <property type="nucleotide sequence ID" value="NZ_CP028304.1"/>
</dbReference>
<dbReference type="SMR" id="B7LI04"/>
<dbReference type="GeneID" id="86948169"/>
<dbReference type="KEGG" id="eck:EC55989_3721"/>
<dbReference type="HOGENOM" id="CLU_065464_1_2_6"/>
<dbReference type="Proteomes" id="UP000000746">
    <property type="component" value="Chromosome"/>
</dbReference>
<dbReference type="GO" id="GO:0022625">
    <property type="term" value="C:cytosolic large ribosomal subunit"/>
    <property type="evidence" value="ECO:0007669"/>
    <property type="project" value="TreeGrafter"/>
</dbReference>
<dbReference type="GO" id="GO:0019843">
    <property type="term" value="F:rRNA binding"/>
    <property type="evidence" value="ECO:0007669"/>
    <property type="project" value="UniProtKB-UniRule"/>
</dbReference>
<dbReference type="GO" id="GO:0003735">
    <property type="term" value="F:structural constituent of ribosome"/>
    <property type="evidence" value="ECO:0007669"/>
    <property type="project" value="InterPro"/>
</dbReference>
<dbReference type="GO" id="GO:0002181">
    <property type="term" value="P:cytoplasmic translation"/>
    <property type="evidence" value="ECO:0007669"/>
    <property type="project" value="TreeGrafter"/>
</dbReference>
<dbReference type="FunFam" id="3.90.930.12:FF:000001">
    <property type="entry name" value="50S ribosomal protein L6"/>
    <property type="match status" value="1"/>
</dbReference>
<dbReference type="FunFam" id="3.90.930.12:FF:000002">
    <property type="entry name" value="50S ribosomal protein L6"/>
    <property type="match status" value="1"/>
</dbReference>
<dbReference type="Gene3D" id="3.90.930.12">
    <property type="entry name" value="Ribosomal protein L6, alpha-beta domain"/>
    <property type="match status" value="2"/>
</dbReference>
<dbReference type="HAMAP" id="MF_01365_B">
    <property type="entry name" value="Ribosomal_uL6_B"/>
    <property type="match status" value="1"/>
</dbReference>
<dbReference type="InterPro" id="IPR000702">
    <property type="entry name" value="Ribosomal_uL6-like"/>
</dbReference>
<dbReference type="InterPro" id="IPR036789">
    <property type="entry name" value="Ribosomal_uL6-like_a/b-dom_sf"/>
</dbReference>
<dbReference type="InterPro" id="IPR020040">
    <property type="entry name" value="Ribosomal_uL6_a/b-dom"/>
</dbReference>
<dbReference type="InterPro" id="IPR019906">
    <property type="entry name" value="Ribosomal_uL6_bac-type"/>
</dbReference>
<dbReference type="InterPro" id="IPR002358">
    <property type="entry name" value="Ribosomal_uL6_CS"/>
</dbReference>
<dbReference type="NCBIfam" id="TIGR03654">
    <property type="entry name" value="L6_bact"/>
    <property type="match status" value="1"/>
</dbReference>
<dbReference type="PANTHER" id="PTHR11655">
    <property type="entry name" value="60S/50S RIBOSOMAL PROTEIN L6/L9"/>
    <property type="match status" value="1"/>
</dbReference>
<dbReference type="PANTHER" id="PTHR11655:SF14">
    <property type="entry name" value="LARGE RIBOSOMAL SUBUNIT PROTEIN UL6M"/>
    <property type="match status" value="1"/>
</dbReference>
<dbReference type="Pfam" id="PF00347">
    <property type="entry name" value="Ribosomal_L6"/>
    <property type="match status" value="2"/>
</dbReference>
<dbReference type="PIRSF" id="PIRSF002162">
    <property type="entry name" value="Ribosomal_L6"/>
    <property type="match status" value="1"/>
</dbReference>
<dbReference type="PRINTS" id="PR00059">
    <property type="entry name" value="RIBOSOMALL6"/>
</dbReference>
<dbReference type="SUPFAM" id="SSF56053">
    <property type="entry name" value="Ribosomal protein L6"/>
    <property type="match status" value="2"/>
</dbReference>
<dbReference type="PROSITE" id="PS00525">
    <property type="entry name" value="RIBOSOMAL_L6_1"/>
    <property type="match status" value="1"/>
</dbReference>
<name>RL6_ECO55</name>
<comment type="function">
    <text evidence="1">This protein binds to the 23S rRNA, and is important in its secondary structure. It is located near the subunit interface in the base of the L7/L12 stalk, and near the tRNA binding site of the peptidyltransferase center.</text>
</comment>
<comment type="subunit">
    <text evidence="1">Part of the 50S ribosomal subunit.</text>
</comment>
<comment type="similarity">
    <text evidence="1">Belongs to the universal ribosomal protein uL6 family.</text>
</comment>
<reference key="1">
    <citation type="journal article" date="2009" name="PLoS Genet.">
        <title>Organised genome dynamics in the Escherichia coli species results in highly diverse adaptive paths.</title>
        <authorList>
            <person name="Touchon M."/>
            <person name="Hoede C."/>
            <person name="Tenaillon O."/>
            <person name="Barbe V."/>
            <person name="Baeriswyl S."/>
            <person name="Bidet P."/>
            <person name="Bingen E."/>
            <person name="Bonacorsi S."/>
            <person name="Bouchier C."/>
            <person name="Bouvet O."/>
            <person name="Calteau A."/>
            <person name="Chiapello H."/>
            <person name="Clermont O."/>
            <person name="Cruveiller S."/>
            <person name="Danchin A."/>
            <person name="Diard M."/>
            <person name="Dossat C."/>
            <person name="Karoui M.E."/>
            <person name="Frapy E."/>
            <person name="Garry L."/>
            <person name="Ghigo J.M."/>
            <person name="Gilles A.M."/>
            <person name="Johnson J."/>
            <person name="Le Bouguenec C."/>
            <person name="Lescat M."/>
            <person name="Mangenot S."/>
            <person name="Martinez-Jehanne V."/>
            <person name="Matic I."/>
            <person name="Nassif X."/>
            <person name="Oztas S."/>
            <person name="Petit M.A."/>
            <person name="Pichon C."/>
            <person name="Rouy Z."/>
            <person name="Ruf C.S."/>
            <person name="Schneider D."/>
            <person name="Tourret J."/>
            <person name="Vacherie B."/>
            <person name="Vallenet D."/>
            <person name="Medigue C."/>
            <person name="Rocha E.P.C."/>
            <person name="Denamur E."/>
        </authorList>
    </citation>
    <scope>NUCLEOTIDE SEQUENCE [LARGE SCALE GENOMIC DNA]</scope>
    <source>
        <strain>55989 / EAEC</strain>
    </source>
</reference>
<sequence>MSRVAKAPVVVPAGVDVKINGQVITIKGKNGELTRTLNDAVEVKHADNTLTFGPRDGYADGWAQAGTARALLNSMVIGVTEGFTKKLQLVGVGYRAAVKGNVINLSLGFSHPVDHQLPAGITAECPTQTEIVLKGADKQVIGQVAADLRAYRRPEPYKGKGVRYADEVVRTKEAKKK</sequence>
<gene>
    <name evidence="1" type="primary">rplF</name>
    <name type="ordered locus">EC55989_3721</name>
</gene>